<gene>
    <name evidence="1" type="primary">pyrE</name>
    <name type="ordered locus">PF1034</name>
</gene>
<dbReference type="EC" id="2.4.2.10" evidence="1"/>
<dbReference type="EMBL" id="AE009950">
    <property type="protein sequence ID" value="AAL81158.1"/>
    <property type="molecule type" value="Genomic_DNA"/>
</dbReference>
<dbReference type="RefSeq" id="WP_011012171.1">
    <property type="nucleotide sequence ID" value="NZ_CP023154.1"/>
</dbReference>
<dbReference type="SMR" id="P58861"/>
<dbReference type="STRING" id="186497.PF1034"/>
<dbReference type="PaxDb" id="186497-PF1034"/>
<dbReference type="GeneID" id="41712845"/>
<dbReference type="KEGG" id="pfu:PF1034"/>
<dbReference type="PATRIC" id="fig|186497.12.peg.1095"/>
<dbReference type="eggNOG" id="arCOG00029">
    <property type="taxonomic scope" value="Archaea"/>
</dbReference>
<dbReference type="HOGENOM" id="CLU_074878_2_0_2"/>
<dbReference type="OrthoDB" id="9089at2157"/>
<dbReference type="PhylomeDB" id="P58861"/>
<dbReference type="UniPathway" id="UPA00070">
    <property type="reaction ID" value="UER00119"/>
</dbReference>
<dbReference type="Proteomes" id="UP000001013">
    <property type="component" value="Chromosome"/>
</dbReference>
<dbReference type="GO" id="GO:0000287">
    <property type="term" value="F:magnesium ion binding"/>
    <property type="evidence" value="ECO:0007669"/>
    <property type="project" value="UniProtKB-UniRule"/>
</dbReference>
<dbReference type="GO" id="GO:0004588">
    <property type="term" value="F:orotate phosphoribosyltransferase activity"/>
    <property type="evidence" value="ECO:0007669"/>
    <property type="project" value="UniProtKB-UniRule"/>
</dbReference>
<dbReference type="GO" id="GO:0044205">
    <property type="term" value="P:'de novo' UMP biosynthetic process"/>
    <property type="evidence" value="ECO:0007669"/>
    <property type="project" value="UniProtKB-UniRule"/>
</dbReference>
<dbReference type="GO" id="GO:0019856">
    <property type="term" value="P:pyrimidine nucleobase biosynthetic process"/>
    <property type="evidence" value="ECO:0007669"/>
    <property type="project" value="TreeGrafter"/>
</dbReference>
<dbReference type="CDD" id="cd06223">
    <property type="entry name" value="PRTases_typeI"/>
    <property type="match status" value="1"/>
</dbReference>
<dbReference type="FunFam" id="3.40.50.2020:FF:000029">
    <property type="entry name" value="Orotate phosphoribosyltransferase"/>
    <property type="match status" value="1"/>
</dbReference>
<dbReference type="Gene3D" id="3.40.50.2020">
    <property type="match status" value="1"/>
</dbReference>
<dbReference type="HAMAP" id="MF_01208">
    <property type="entry name" value="PyrE"/>
    <property type="match status" value="1"/>
</dbReference>
<dbReference type="InterPro" id="IPR023031">
    <property type="entry name" value="OPRT"/>
</dbReference>
<dbReference type="InterPro" id="IPR004467">
    <property type="entry name" value="Or_phspho_trans_dom"/>
</dbReference>
<dbReference type="InterPro" id="IPR000836">
    <property type="entry name" value="PRibTrfase_dom"/>
</dbReference>
<dbReference type="InterPro" id="IPR029057">
    <property type="entry name" value="PRTase-like"/>
</dbReference>
<dbReference type="NCBIfam" id="TIGR00336">
    <property type="entry name" value="pyrE"/>
    <property type="match status" value="1"/>
</dbReference>
<dbReference type="PANTHER" id="PTHR19278">
    <property type="entry name" value="OROTATE PHOSPHORIBOSYLTRANSFERASE"/>
    <property type="match status" value="1"/>
</dbReference>
<dbReference type="PANTHER" id="PTHR19278:SF9">
    <property type="entry name" value="URIDINE 5'-MONOPHOSPHATE SYNTHASE"/>
    <property type="match status" value="1"/>
</dbReference>
<dbReference type="Pfam" id="PF00156">
    <property type="entry name" value="Pribosyltran"/>
    <property type="match status" value="1"/>
</dbReference>
<dbReference type="SUPFAM" id="SSF53271">
    <property type="entry name" value="PRTase-like"/>
    <property type="match status" value="1"/>
</dbReference>
<organism>
    <name type="scientific">Pyrococcus furiosus (strain ATCC 43587 / DSM 3638 / JCM 8422 / Vc1)</name>
    <dbReference type="NCBI Taxonomy" id="186497"/>
    <lineage>
        <taxon>Archaea</taxon>
        <taxon>Methanobacteriati</taxon>
        <taxon>Methanobacteriota</taxon>
        <taxon>Thermococci</taxon>
        <taxon>Thermococcales</taxon>
        <taxon>Thermococcaceae</taxon>
        <taxon>Pyrococcus</taxon>
    </lineage>
</organism>
<feature type="chain" id="PRO_0000110786" description="Orotate phosphoribosyltransferase">
    <location>
        <begin position="1"/>
        <end position="182"/>
    </location>
</feature>
<feature type="binding site" evidence="1">
    <location>
        <position position="91"/>
    </location>
    <ligand>
        <name>5-phospho-alpha-D-ribose 1-diphosphate</name>
        <dbReference type="ChEBI" id="CHEBI:58017"/>
        <note>ligand shared between dimeric partners</note>
    </ligand>
</feature>
<feature type="binding site" description="in other chain" evidence="1">
    <location>
        <position position="92"/>
    </location>
    <ligand>
        <name>5-phospho-alpha-D-ribose 1-diphosphate</name>
        <dbReference type="ChEBI" id="CHEBI:58017"/>
        <note>ligand shared between dimeric partners</note>
    </ligand>
</feature>
<feature type="binding site" evidence="1">
    <location>
        <position position="95"/>
    </location>
    <ligand>
        <name>5-phospho-alpha-D-ribose 1-diphosphate</name>
        <dbReference type="ChEBI" id="CHEBI:58017"/>
        <note>ligand shared between dimeric partners</note>
    </ligand>
</feature>
<feature type="binding site" evidence="1">
    <location>
        <position position="97"/>
    </location>
    <ligand>
        <name>5-phospho-alpha-D-ribose 1-diphosphate</name>
        <dbReference type="ChEBI" id="CHEBI:58017"/>
        <note>ligand shared between dimeric partners</note>
    </ligand>
</feature>
<feature type="binding site" description="in other chain" evidence="1">
    <location>
        <begin position="117"/>
        <end position="125"/>
    </location>
    <ligand>
        <name>5-phospho-alpha-D-ribose 1-diphosphate</name>
        <dbReference type="ChEBI" id="CHEBI:58017"/>
        <note>ligand shared between dimeric partners</note>
    </ligand>
</feature>
<feature type="binding site" evidence="1">
    <location>
        <position position="121"/>
    </location>
    <ligand>
        <name>orotate</name>
        <dbReference type="ChEBI" id="CHEBI:30839"/>
    </ligand>
</feature>
<feature type="binding site" evidence="1">
    <location>
        <position position="149"/>
    </location>
    <ligand>
        <name>orotate</name>
        <dbReference type="ChEBI" id="CHEBI:30839"/>
    </ligand>
</feature>
<keyword id="KW-0328">Glycosyltransferase</keyword>
<keyword id="KW-0460">Magnesium</keyword>
<keyword id="KW-0665">Pyrimidine biosynthesis</keyword>
<keyword id="KW-1185">Reference proteome</keyword>
<keyword id="KW-0808">Transferase</keyword>
<reference key="1">
    <citation type="journal article" date="1999" name="Genetics">
        <title>Divergence of the hyperthermophilic archaea Pyrococcus furiosus and P. horikoshii inferred from complete genomic sequences.</title>
        <authorList>
            <person name="Maeder D.L."/>
            <person name="Weiss R.B."/>
            <person name="Dunn D.M."/>
            <person name="Cherry J.L."/>
            <person name="Gonzalez J.M."/>
            <person name="DiRuggiero J."/>
            <person name="Robb F.T."/>
        </authorList>
    </citation>
    <scope>NUCLEOTIDE SEQUENCE [LARGE SCALE GENOMIC DNA]</scope>
    <source>
        <strain>ATCC 43587 / DSM 3638 / JCM 8422 / Vc1</strain>
    </source>
</reference>
<proteinExistence type="inferred from homology"/>
<name>PYRE_PYRFU</name>
<protein>
    <recommendedName>
        <fullName evidence="1">Orotate phosphoribosyltransferase</fullName>
        <shortName evidence="1">OPRT</shortName>
        <shortName evidence="1">OPRTase</shortName>
        <ecNumber evidence="1">2.4.2.10</ecNumber>
    </recommendedName>
</protein>
<accession>P58861</accession>
<sequence length="182" mass="20098">MKEELIRMILEEECIKFGHFILTSGKESSYYIDIKKLITNPKALRLIARLIKEKAEEEGIQFDKVAGPELGAVPIATALALETDRPLLIVRKKKKEHGTGRQIEGEVKEGDRVLLVEDVTTTGGSVLRAAKILKEAGAEITGIFVVVDREEGAKEAIEKEGFKLYPLVLVHELFEAAGVSSE</sequence>
<comment type="function">
    <text evidence="1">Catalyzes the transfer of a ribosyl phosphate group from 5-phosphoribose 1-diphosphate to orotate, leading to the formation of orotidine monophosphate (OMP).</text>
</comment>
<comment type="catalytic activity">
    <reaction evidence="1">
        <text>orotidine 5'-phosphate + diphosphate = orotate + 5-phospho-alpha-D-ribose 1-diphosphate</text>
        <dbReference type="Rhea" id="RHEA:10380"/>
        <dbReference type="ChEBI" id="CHEBI:30839"/>
        <dbReference type="ChEBI" id="CHEBI:33019"/>
        <dbReference type="ChEBI" id="CHEBI:57538"/>
        <dbReference type="ChEBI" id="CHEBI:58017"/>
        <dbReference type="EC" id="2.4.2.10"/>
    </reaction>
</comment>
<comment type="cofactor">
    <cofactor evidence="1">
        <name>Mg(2+)</name>
        <dbReference type="ChEBI" id="CHEBI:18420"/>
    </cofactor>
</comment>
<comment type="pathway">
    <text evidence="1">Pyrimidine metabolism; UMP biosynthesis via de novo pathway; UMP from orotate: step 1/2.</text>
</comment>
<comment type="subunit">
    <text evidence="1">Homodimer.</text>
</comment>
<comment type="similarity">
    <text evidence="1">Belongs to the purine/pyrimidine phosphoribosyltransferase family. PyrE subfamily.</text>
</comment>
<evidence type="ECO:0000255" key="1">
    <source>
        <dbReference type="HAMAP-Rule" id="MF_01208"/>
    </source>
</evidence>